<dbReference type="EC" id="2.7.13.3"/>
<dbReference type="EMBL" id="CP000255">
    <property type="protein sequence ID" value="ABD20913.1"/>
    <property type="molecule type" value="Genomic_DNA"/>
</dbReference>
<dbReference type="RefSeq" id="WP_000244412.1">
    <property type="nucleotide sequence ID" value="NZ_CP027476.1"/>
</dbReference>
<dbReference type="SMR" id="Q2FIT5"/>
<dbReference type="KEGG" id="saa:SAUSA300_0690"/>
<dbReference type="HOGENOM" id="CLU_000445_89_3_9"/>
<dbReference type="OMA" id="MRCDPVR"/>
<dbReference type="Proteomes" id="UP000001939">
    <property type="component" value="Chromosome"/>
</dbReference>
<dbReference type="GO" id="GO:0005886">
    <property type="term" value="C:plasma membrane"/>
    <property type="evidence" value="ECO:0007669"/>
    <property type="project" value="UniProtKB-SubCell"/>
</dbReference>
<dbReference type="GO" id="GO:0005524">
    <property type="term" value="F:ATP binding"/>
    <property type="evidence" value="ECO:0007669"/>
    <property type="project" value="UniProtKB-KW"/>
</dbReference>
<dbReference type="GO" id="GO:0004721">
    <property type="term" value="F:phosphoprotein phosphatase activity"/>
    <property type="evidence" value="ECO:0007669"/>
    <property type="project" value="TreeGrafter"/>
</dbReference>
<dbReference type="GO" id="GO:0000155">
    <property type="term" value="F:phosphorelay sensor kinase activity"/>
    <property type="evidence" value="ECO:0007669"/>
    <property type="project" value="InterPro"/>
</dbReference>
<dbReference type="GO" id="GO:0016036">
    <property type="term" value="P:cellular response to phosphate starvation"/>
    <property type="evidence" value="ECO:0007669"/>
    <property type="project" value="TreeGrafter"/>
</dbReference>
<dbReference type="CDD" id="cd00075">
    <property type="entry name" value="HATPase"/>
    <property type="match status" value="1"/>
</dbReference>
<dbReference type="CDD" id="cd00082">
    <property type="entry name" value="HisKA"/>
    <property type="match status" value="1"/>
</dbReference>
<dbReference type="FunFam" id="1.10.287.130:FF:000077">
    <property type="entry name" value="Sensor histidine kinase SaeS"/>
    <property type="match status" value="1"/>
</dbReference>
<dbReference type="Gene3D" id="1.10.287.130">
    <property type="match status" value="1"/>
</dbReference>
<dbReference type="Gene3D" id="6.10.340.10">
    <property type="match status" value="1"/>
</dbReference>
<dbReference type="Gene3D" id="3.30.565.10">
    <property type="entry name" value="Histidine kinase-like ATPase, C-terminal domain"/>
    <property type="match status" value="1"/>
</dbReference>
<dbReference type="InterPro" id="IPR050351">
    <property type="entry name" value="2-comp_sensor_kinase"/>
</dbReference>
<dbReference type="InterPro" id="IPR003660">
    <property type="entry name" value="HAMP_dom"/>
</dbReference>
<dbReference type="InterPro" id="IPR036890">
    <property type="entry name" value="HATPase_C_sf"/>
</dbReference>
<dbReference type="InterPro" id="IPR005467">
    <property type="entry name" value="His_kinase_dom"/>
</dbReference>
<dbReference type="InterPro" id="IPR003661">
    <property type="entry name" value="HisK_dim/P_dom"/>
</dbReference>
<dbReference type="InterPro" id="IPR036097">
    <property type="entry name" value="HisK_dim/P_sf"/>
</dbReference>
<dbReference type="InterPro" id="IPR004358">
    <property type="entry name" value="Sig_transdc_His_kin-like_C"/>
</dbReference>
<dbReference type="PANTHER" id="PTHR45453">
    <property type="entry name" value="PHOSPHATE REGULON SENSOR PROTEIN PHOR"/>
    <property type="match status" value="1"/>
</dbReference>
<dbReference type="PANTHER" id="PTHR45453:SF1">
    <property type="entry name" value="PHOSPHATE REGULON SENSOR PROTEIN PHOR"/>
    <property type="match status" value="1"/>
</dbReference>
<dbReference type="Pfam" id="PF00672">
    <property type="entry name" value="HAMP"/>
    <property type="match status" value="1"/>
</dbReference>
<dbReference type="Pfam" id="PF02518">
    <property type="entry name" value="HATPase_c"/>
    <property type="match status" value="1"/>
</dbReference>
<dbReference type="Pfam" id="PF00512">
    <property type="entry name" value="HisKA"/>
    <property type="match status" value="1"/>
</dbReference>
<dbReference type="PRINTS" id="PR00344">
    <property type="entry name" value="BCTRLSENSOR"/>
</dbReference>
<dbReference type="SMART" id="SM00387">
    <property type="entry name" value="HATPase_c"/>
    <property type="match status" value="1"/>
</dbReference>
<dbReference type="SMART" id="SM00388">
    <property type="entry name" value="HisKA"/>
    <property type="match status" value="1"/>
</dbReference>
<dbReference type="SUPFAM" id="SSF55874">
    <property type="entry name" value="ATPase domain of HSP90 chaperone/DNA topoisomerase II/histidine kinase"/>
    <property type="match status" value="1"/>
</dbReference>
<dbReference type="SUPFAM" id="SSF47384">
    <property type="entry name" value="Homodimeric domain of signal transducing histidine kinase"/>
    <property type="match status" value="1"/>
</dbReference>
<dbReference type="PROSITE" id="PS50885">
    <property type="entry name" value="HAMP"/>
    <property type="match status" value="1"/>
</dbReference>
<dbReference type="PROSITE" id="PS50109">
    <property type="entry name" value="HIS_KIN"/>
    <property type="match status" value="1"/>
</dbReference>
<organism>
    <name type="scientific">Staphylococcus aureus (strain USA300)</name>
    <dbReference type="NCBI Taxonomy" id="367830"/>
    <lineage>
        <taxon>Bacteria</taxon>
        <taxon>Bacillati</taxon>
        <taxon>Bacillota</taxon>
        <taxon>Bacilli</taxon>
        <taxon>Bacillales</taxon>
        <taxon>Staphylococcaceae</taxon>
        <taxon>Staphylococcus</taxon>
    </lineage>
</organism>
<keyword id="KW-0067">ATP-binding</keyword>
<keyword id="KW-1003">Cell membrane</keyword>
<keyword id="KW-0418">Kinase</keyword>
<keyword id="KW-0472">Membrane</keyword>
<keyword id="KW-0547">Nucleotide-binding</keyword>
<keyword id="KW-0597">Phosphoprotein</keyword>
<keyword id="KW-0808">Transferase</keyword>
<keyword id="KW-0812">Transmembrane</keyword>
<keyword id="KW-1133">Transmembrane helix</keyword>
<keyword id="KW-0902">Two-component regulatory system</keyword>
<keyword id="KW-0843">Virulence</keyword>
<gene>
    <name type="primary">saeS</name>
    <name type="ordered locus">SAUSA300_0690</name>
</gene>
<protein>
    <recommendedName>
        <fullName>Histidine protein kinase SaeS</fullName>
        <ecNumber>2.7.13.3</ecNumber>
    </recommendedName>
    <alternativeName>
        <fullName>Sensor protein SaeS</fullName>
    </alternativeName>
    <alternativeName>
        <fullName>Staphylococcus exoprotein expression protein S</fullName>
    </alternativeName>
</protein>
<evidence type="ECO:0000250" key="1"/>
<evidence type="ECO:0000255" key="2"/>
<evidence type="ECO:0000255" key="3">
    <source>
        <dbReference type="PROSITE-ProRule" id="PRU00102"/>
    </source>
</evidence>
<evidence type="ECO:0000255" key="4">
    <source>
        <dbReference type="PROSITE-ProRule" id="PRU00107"/>
    </source>
</evidence>
<reference key="1">
    <citation type="journal article" date="2006" name="Lancet">
        <title>Complete genome sequence of USA300, an epidemic clone of community-acquired meticillin-resistant Staphylococcus aureus.</title>
        <authorList>
            <person name="Diep B.A."/>
            <person name="Gill S.R."/>
            <person name="Chang R.F."/>
            <person name="Phan T.H."/>
            <person name="Chen J.H."/>
            <person name="Davidson M.G."/>
            <person name="Lin F."/>
            <person name="Lin J."/>
            <person name="Carleton H.A."/>
            <person name="Mongodin E.F."/>
            <person name="Sensabaugh G.F."/>
            <person name="Perdreau-Remington F."/>
        </authorList>
    </citation>
    <scope>NUCLEOTIDE SEQUENCE [LARGE SCALE GENOMIC DNA]</scope>
    <source>
        <strain>USA300</strain>
    </source>
</reference>
<feature type="chain" id="PRO_0000295938" description="Histidine protein kinase SaeS">
    <location>
        <begin position="1"/>
        <end position="351"/>
    </location>
</feature>
<feature type="transmembrane region" description="Helical" evidence="2">
    <location>
        <begin position="9"/>
        <end position="29"/>
    </location>
</feature>
<feature type="transmembrane region" description="Helical" evidence="2">
    <location>
        <begin position="40"/>
        <end position="60"/>
    </location>
</feature>
<feature type="domain" description="HAMP" evidence="3">
    <location>
        <begin position="61"/>
        <end position="114"/>
    </location>
</feature>
<feature type="domain" description="Histidine kinase" evidence="4">
    <location>
        <begin position="129"/>
        <end position="348"/>
    </location>
</feature>
<feature type="modified residue" description="Phosphohistidine; by autocatalysis" evidence="4">
    <location>
        <position position="132"/>
    </location>
</feature>
<sequence length="351" mass="39741">MVLSIRSQIIIGVVSSILLTSTILAIAYILMWFNGHMTLTLTLTTIITSCLTLLICSIFINPLIQKIKQFNIKTKQFANGNYASNDKTFNSPKEIYELNQSFNKMASEITQQMNQIKSEQQEKTELIQNLAHDLKTPLASIISYSEGLRDGIITKDHEIKESYDILIKQANRLSTLFDDMTHIITLNTGKTYPPELIQLDQLLVSILQPYEQRIKHENRTLEVNFCNEIDAFYQYRTPLERILTNLLDNALKFSNVGSRIDINISENEDQDTIDIAISDEGIGIIPELQERIFERTFRVENSRNTKTGGSGLGLYIANELAQQNNAKISVSSDIDVGTTMTVTLHKLDITS</sequence>
<comment type="function">
    <text evidence="1">Member of the two-component regulatory system SaeR/SaeS involved in the regulation of staphylococcal virulence factors in a strain-dependent fashion. Probably functions as a membrane-associated protein kinase that upon sensing the appropriate signal, autophosphorylates and in turn activates the cytosolic response regulator SaeR (By similarity).</text>
</comment>
<comment type="catalytic activity">
    <reaction>
        <text>ATP + protein L-histidine = ADP + protein N-phospho-L-histidine.</text>
        <dbReference type="EC" id="2.7.13.3"/>
    </reaction>
</comment>
<comment type="subcellular location">
    <subcellularLocation>
        <location evidence="1">Cell membrane</location>
        <topology evidence="1">Multi-pass membrane protein</topology>
    </subcellularLocation>
</comment>
<comment type="PTM">
    <text evidence="1">Autophosphorylated.</text>
</comment>
<accession>Q2FIT5</accession>
<name>SAES_STAA3</name>
<proteinExistence type="inferred from homology"/>